<feature type="chain" id="PRO_0000377188" description="tRNA dimethylallyltransferase">
    <location>
        <begin position="1"/>
        <end position="276"/>
    </location>
</feature>
<feature type="region of interest" description="Interaction with substrate tRNA" evidence="1">
    <location>
        <begin position="9"/>
        <end position="12"/>
    </location>
</feature>
<feature type="site" description="Interaction with substrate tRNA" evidence="1">
    <location>
        <position position="73"/>
    </location>
</feature>
<protein>
    <recommendedName>
        <fullName>tRNA dimethylallyltransferase</fullName>
        <ecNumber>2.5.1.75</ecNumber>
    </recommendedName>
    <alternativeName>
        <fullName>Dimethylallyl diphosphate:tRNA dimethylallyltransferase</fullName>
        <shortName>DMAPP:tRNA dimethylallyltransferase</shortName>
        <shortName>DMATase</shortName>
    </alternativeName>
    <alternativeName>
        <fullName>Isopentenyl-diphosphate:tRNA isopentenyltransferase</fullName>
        <shortName>IPP transferase</shortName>
        <shortName>IPPT</shortName>
        <shortName>IPTase</shortName>
    </alternativeName>
</protein>
<accession>B2UVF6</accession>
<reference key="1">
    <citation type="submission" date="2008-05" db="EMBL/GenBank/DDBJ databases">
        <title>Genome sequence of Helicobacter pylori from the remote Amazon: traces of Asian ancestry of the first Americans.</title>
        <authorList>
            <person name="Kersulyte D."/>
            <person name="Kalia A."/>
            <person name="Gilman R.H."/>
            <person name="Berg D.E."/>
        </authorList>
    </citation>
    <scope>NUCLEOTIDE SEQUENCE [LARGE SCALE GENOMIC DNA]</scope>
    <source>
        <strain>Shi470</strain>
    </source>
</reference>
<organism>
    <name type="scientific">Helicobacter pylori (strain Shi470)</name>
    <dbReference type="NCBI Taxonomy" id="512562"/>
    <lineage>
        <taxon>Bacteria</taxon>
        <taxon>Pseudomonadati</taxon>
        <taxon>Campylobacterota</taxon>
        <taxon>Epsilonproteobacteria</taxon>
        <taxon>Campylobacterales</taxon>
        <taxon>Helicobacteraceae</taxon>
        <taxon>Helicobacter</taxon>
    </lineage>
</organism>
<gene>
    <name type="primary">miaA</name>
    <name type="ordered locus">HPSH_07210</name>
</gene>
<proteinExistence type="inferred from homology"/>
<comment type="function">
    <text evidence="1">Catalyzes the transfer of a dimethylallyl group onto the adenine at position 37 in tRNAs that read codons beginning with uridine, leading to the formation of N6-(dimethylallyl)adenosine (i(6)A).</text>
</comment>
<comment type="catalytic activity">
    <reaction>
        <text>adenosine(37) in tRNA + dimethylallyl diphosphate = N(6)-dimethylallyladenosine(37) in tRNA + diphosphate</text>
        <dbReference type="Rhea" id="RHEA:26482"/>
        <dbReference type="Rhea" id="RHEA-COMP:10162"/>
        <dbReference type="Rhea" id="RHEA-COMP:10375"/>
        <dbReference type="ChEBI" id="CHEBI:33019"/>
        <dbReference type="ChEBI" id="CHEBI:57623"/>
        <dbReference type="ChEBI" id="CHEBI:74411"/>
        <dbReference type="ChEBI" id="CHEBI:74415"/>
        <dbReference type="EC" id="2.5.1.75"/>
    </reaction>
</comment>
<comment type="cofactor">
    <cofactor evidence="1">
        <name>Mg(2+)</name>
        <dbReference type="ChEBI" id="CHEBI:18420"/>
    </cofactor>
</comment>
<comment type="subunit">
    <text evidence="1">Monomer.</text>
</comment>
<comment type="similarity">
    <text evidence="2">Belongs to the IPP transferase family.</text>
</comment>
<keyword id="KW-0067">ATP-binding</keyword>
<keyword id="KW-0460">Magnesium</keyword>
<keyword id="KW-0547">Nucleotide-binding</keyword>
<keyword id="KW-0808">Transferase</keyword>
<keyword id="KW-0819">tRNA processing</keyword>
<name>MIAA_HELPS</name>
<evidence type="ECO:0000250" key="1"/>
<evidence type="ECO:0000305" key="2"/>
<dbReference type="EC" id="2.5.1.75"/>
<dbReference type="EMBL" id="CP001072">
    <property type="protein sequence ID" value="ACD48838.1"/>
    <property type="molecule type" value="Genomic_DNA"/>
</dbReference>
<dbReference type="SMR" id="B2UVF6"/>
<dbReference type="KEGG" id="hps:HPSH_07210"/>
<dbReference type="HOGENOM" id="CLU_032616_0_1_7"/>
<dbReference type="GO" id="GO:0005524">
    <property type="term" value="F:ATP binding"/>
    <property type="evidence" value="ECO:0007669"/>
    <property type="project" value="UniProtKB-KW"/>
</dbReference>
<dbReference type="GO" id="GO:0052381">
    <property type="term" value="F:tRNA dimethylallyltransferase activity"/>
    <property type="evidence" value="ECO:0007669"/>
    <property type="project" value="UniProtKB-EC"/>
</dbReference>
<dbReference type="GO" id="GO:0006400">
    <property type="term" value="P:tRNA modification"/>
    <property type="evidence" value="ECO:0007669"/>
    <property type="project" value="TreeGrafter"/>
</dbReference>
<dbReference type="Gene3D" id="1.10.20.140">
    <property type="match status" value="1"/>
</dbReference>
<dbReference type="Gene3D" id="3.40.50.300">
    <property type="entry name" value="P-loop containing nucleotide triphosphate hydrolases"/>
    <property type="match status" value="1"/>
</dbReference>
<dbReference type="InterPro" id="IPR039657">
    <property type="entry name" value="Dimethylallyltransferase"/>
</dbReference>
<dbReference type="InterPro" id="IPR018022">
    <property type="entry name" value="IPT"/>
</dbReference>
<dbReference type="InterPro" id="IPR027417">
    <property type="entry name" value="P-loop_NTPase"/>
</dbReference>
<dbReference type="NCBIfam" id="TIGR00174">
    <property type="entry name" value="miaA"/>
    <property type="match status" value="1"/>
</dbReference>
<dbReference type="PANTHER" id="PTHR11088">
    <property type="entry name" value="TRNA DIMETHYLALLYLTRANSFERASE"/>
    <property type="match status" value="1"/>
</dbReference>
<dbReference type="PANTHER" id="PTHR11088:SF60">
    <property type="entry name" value="TRNA DIMETHYLALLYLTRANSFERASE"/>
    <property type="match status" value="1"/>
</dbReference>
<dbReference type="Pfam" id="PF01715">
    <property type="entry name" value="IPPT"/>
    <property type="match status" value="1"/>
</dbReference>
<sequence>MDAEIFSLDSLSIYKDINIASAKPSLKERKNIKHYALDYLSIDEKNNAPLFKTLLEDAMRVSSKEVLLIVGGSSFYLKSILEGLSDTPKISGEEAVKIEQEINSLANPYAFLKSIDPTSAFKIHPNDTYRIHKALEIFYSTHTPPSEYFKTNPKKPFEHAISLFALSIEKSALANNIKQRTKNMLDCGLIEEIKALYAQYPKDSQPFKAIGVKESILFLEKQLTLKKLEEAIISNTIQLAKRQNTFNKTQFNNLYTGSVGEVRHAILNHSKSAIKG</sequence>